<feature type="chain" id="PRO_0000425221" description="Phosphatidylcholine synthase">
    <location>
        <begin position="1"/>
        <end position="255"/>
    </location>
</feature>
<feature type="topological domain" description="Cytoplasmic" evidence="1 2">
    <location>
        <begin position="1"/>
        <end position="13"/>
    </location>
</feature>
<feature type="transmembrane region" description="Helical; Name=1" evidence="2">
    <location>
        <begin position="14"/>
        <end position="34"/>
    </location>
</feature>
<feature type="topological domain" description="Periplasmic" evidence="2">
    <location>
        <begin position="35"/>
        <end position="42"/>
    </location>
</feature>
<feature type="transmembrane region" description="Helical; Name=2" evidence="2">
    <location>
        <begin position="43"/>
        <end position="63"/>
    </location>
</feature>
<feature type="topological domain" description="Cytoplasmic" evidence="2">
    <location>
        <begin position="64"/>
        <end position="76"/>
    </location>
</feature>
<feature type="transmembrane region" description="Helical; Name=3" evidence="2 7">
    <location>
        <begin position="77"/>
        <end position="97"/>
    </location>
</feature>
<feature type="topological domain" description="Periplasmic" evidence="2 7">
    <location>
        <begin position="98"/>
        <end position="103"/>
    </location>
</feature>
<feature type="transmembrane region" description="Helical; Name=4" evidence="2 7">
    <location>
        <begin position="104"/>
        <end position="124"/>
    </location>
</feature>
<feature type="topological domain" description="Cytoplasmic" evidence="2 7">
    <location>
        <begin position="125"/>
        <end position="133"/>
    </location>
</feature>
<feature type="transmembrane region" description="Helical; Name=5" evidence="2">
    <location>
        <begin position="134"/>
        <end position="154"/>
    </location>
</feature>
<feature type="topological domain" description="Periplasmic" evidence="2 7">
    <location>
        <position position="155"/>
    </location>
</feature>
<feature type="transmembrane region" description="Helical; Name=6" evidence="2 7">
    <location>
        <begin position="156"/>
        <end position="175"/>
    </location>
</feature>
<feature type="topological domain" description="Cytoplasmic" evidence="2">
    <location>
        <begin position="176"/>
        <end position="190"/>
    </location>
</feature>
<feature type="transmembrane region" description="Helical; Name=7" evidence="2">
    <location>
        <begin position="191"/>
        <end position="211"/>
    </location>
</feature>
<feature type="topological domain" description="Periplasmic" evidence="2">
    <location>
        <begin position="212"/>
        <end position="217"/>
    </location>
</feature>
<feature type="transmembrane region" description="Helical; Name=8" evidence="2">
    <location>
        <begin position="218"/>
        <end position="238"/>
    </location>
</feature>
<feature type="topological domain" description="Cytoplasmic" evidence="1 2">
    <location>
        <begin position="239"/>
        <end position="255"/>
    </location>
</feature>
<dbReference type="EC" id="2.7.8.24" evidence="3 4 8"/>
<dbReference type="EMBL" id="AE017354">
    <property type="protein sequence ID" value="AAU27666.1"/>
    <property type="molecule type" value="Genomic_DNA"/>
</dbReference>
<dbReference type="RefSeq" id="WP_010947313.1">
    <property type="nucleotide sequence ID" value="NC_002942.5"/>
</dbReference>
<dbReference type="RefSeq" id="YP_095613.1">
    <property type="nucleotide sequence ID" value="NC_002942.5"/>
</dbReference>
<dbReference type="SMR" id="Q5ZV56"/>
<dbReference type="STRING" id="272624.lpg1584"/>
<dbReference type="PaxDb" id="272624-lpg1584"/>
<dbReference type="DNASU" id="3077993"/>
<dbReference type="GeneID" id="57035575"/>
<dbReference type="KEGG" id="lpn:lpg1584"/>
<dbReference type="PATRIC" id="fig|272624.6.peg.1660"/>
<dbReference type="eggNOG" id="COG1183">
    <property type="taxonomic scope" value="Bacteria"/>
</dbReference>
<dbReference type="HOGENOM" id="CLU_086279_0_0_6"/>
<dbReference type="OrthoDB" id="350520at2"/>
<dbReference type="Proteomes" id="UP000000609">
    <property type="component" value="Chromosome"/>
</dbReference>
<dbReference type="GO" id="GO:0005886">
    <property type="term" value="C:plasma membrane"/>
    <property type="evidence" value="ECO:0007669"/>
    <property type="project" value="UniProtKB-SubCell"/>
</dbReference>
<dbReference type="GO" id="GO:0050520">
    <property type="term" value="F:phosphatidylcholine synthase activity"/>
    <property type="evidence" value="ECO:0000314"/>
    <property type="project" value="UniProtKB"/>
</dbReference>
<dbReference type="GO" id="GO:0008654">
    <property type="term" value="P:phospholipid biosynthetic process"/>
    <property type="evidence" value="ECO:0000314"/>
    <property type="project" value="UniProtKB"/>
</dbReference>
<dbReference type="Gene3D" id="1.20.120.1760">
    <property type="match status" value="1"/>
</dbReference>
<dbReference type="InterPro" id="IPR000462">
    <property type="entry name" value="CDP-OH_P_trans"/>
</dbReference>
<dbReference type="InterPro" id="IPR043130">
    <property type="entry name" value="CDP-OH_PTrfase_TM_dom"/>
</dbReference>
<dbReference type="InterPro" id="IPR026027">
    <property type="entry name" value="PcS"/>
</dbReference>
<dbReference type="NCBIfam" id="NF045886">
    <property type="entry name" value="PhCholSynLeg"/>
    <property type="match status" value="1"/>
</dbReference>
<dbReference type="Pfam" id="PF01066">
    <property type="entry name" value="CDP-OH_P_transf"/>
    <property type="match status" value="1"/>
</dbReference>
<dbReference type="PIRSF" id="PIRSF000851">
    <property type="entry name" value="PcS"/>
    <property type="match status" value="1"/>
</dbReference>
<reference evidence="8" key="1">
    <citation type="journal article" date="2004" name="Science">
        <title>The genomic sequence of the accidental pathogen Legionella pneumophila.</title>
        <authorList>
            <person name="Chien M."/>
            <person name="Morozova I."/>
            <person name="Shi S."/>
            <person name="Sheng H."/>
            <person name="Chen J."/>
            <person name="Gomez S.M."/>
            <person name="Asamani G."/>
            <person name="Hill K."/>
            <person name="Nuara J."/>
            <person name="Feder M."/>
            <person name="Rineer J."/>
            <person name="Greenberg J.J."/>
            <person name="Steshenko V."/>
            <person name="Park S.H."/>
            <person name="Zhao B."/>
            <person name="Teplitskaya E."/>
            <person name="Edwards J.R."/>
            <person name="Pampou S."/>
            <person name="Georghiou A."/>
            <person name="Chou I.-C."/>
            <person name="Iannuccilli W."/>
            <person name="Ulz M.E."/>
            <person name="Kim D.H."/>
            <person name="Geringer-Sameth A."/>
            <person name="Goldsberry C."/>
            <person name="Morozov P."/>
            <person name="Fischer S.G."/>
            <person name="Segal G."/>
            <person name="Qu X."/>
            <person name="Rzhetsky A."/>
            <person name="Zhang P."/>
            <person name="Cayanis E."/>
            <person name="De Jong P.J."/>
            <person name="Ju J."/>
            <person name="Kalachikov S."/>
            <person name="Shuman H.A."/>
            <person name="Russo J.J."/>
        </authorList>
    </citation>
    <scope>NUCLEOTIDE SEQUENCE [LARGE SCALE GENOMIC DNA]</scope>
    <source>
        <strain>Philadelphia 1 / ATCC 33152 / DSM 7513</strain>
    </source>
</reference>
<reference evidence="7" key="2">
    <citation type="journal article" date="2003" name="Microbiology">
        <title>Pathways for phosphatidylcholine biosynthesis in bacteria.</title>
        <authorList>
            <person name="Martinez-Morales F."/>
            <person name="Schobert M."/>
            <person name="Lopez-Lara I.M."/>
            <person name="Geiger O."/>
        </authorList>
    </citation>
    <scope>FUNCTION</scope>
    <scope>CATALYTIC ACTIVITY</scope>
    <source>
        <strain evidence="3">Philadelphia 1 / ATCC 33152 / DSM 7513</strain>
    </source>
</reference>
<reference evidence="7" key="3">
    <citation type="journal article" date="2008" name="Cell. Microbiol.">
        <title>Phosphatidylcholine synthesis is required for optimal function of Legionella pneumophila virulence determinants.</title>
        <authorList>
            <person name="Conover G.M."/>
            <person name="Martinez-Morales F."/>
            <person name="Heidtman M.I."/>
            <person name="Luo Z.Q."/>
            <person name="Tang M."/>
            <person name="Chen C."/>
            <person name="Geiger O."/>
            <person name="Isberg R.R."/>
        </authorList>
    </citation>
    <scope>FUNCTION</scope>
    <scope>CATALYTIC ACTIVITY</scope>
    <source>
        <strain evidence="4">Philadelphia 1 / ATCC 33152 / DSM 7513</strain>
    </source>
</reference>
<name>PCS_LEGPH</name>
<keyword id="KW-0997">Cell inner membrane</keyword>
<keyword id="KW-1003">Cell membrane</keyword>
<keyword id="KW-0444">Lipid biosynthesis</keyword>
<keyword id="KW-0443">Lipid metabolism</keyword>
<keyword id="KW-0464">Manganese</keyword>
<keyword id="KW-0472">Membrane</keyword>
<keyword id="KW-0594">Phospholipid biosynthesis</keyword>
<keyword id="KW-1208">Phospholipid metabolism</keyword>
<keyword id="KW-1185">Reference proteome</keyword>
<keyword id="KW-0808">Transferase</keyword>
<keyword id="KW-0812">Transmembrane</keyword>
<keyword id="KW-1133">Transmembrane helix</keyword>
<sequence length="255" mass="29268">MNPIKPPFTLNQYFAAWFVHVFTASAACIGVFSLYKIYQHDYVFALWLMAITVFIDAVDGSLARLVHVKSVLPKIDGALLDNIVDYLNYVITPCFFLLVKPGMLPADYVVPITAAITITSAYQFCQDDAKTPDHFFKGFPCYWNITVFYMYIFNTSMIVNTVLLSLFCVLIFIPVKYVYPSRLDYLTESRVLKILMHCCSALYGISSFCLLVNYPETNKLWVSLSLGYVGMYLFLSFYRTYYPMFKAKITANNKD</sequence>
<proteinExistence type="evidence at protein level"/>
<protein>
    <recommendedName>
        <fullName evidence="5">Phosphatidylcholine synthase</fullName>
        <shortName evidence="1">PC synthase</shortName>
        <shortName evidence="5">PCS</shortName>
        <ecNumber evidence="3 4 8">2.7.8.24</ecNumber>
    </recommendedName>
    <alternativeName>
        <fullName evidence="1 8">CDP-diglyceride-choline O-phosphatidyltransferase</fullName>
    </alternativeName>
</protein>
<comment type="function">
    <text evidence="3 4">Condenses choline with CDP-diglyceride to produce phosphatidylcholine and CMP. Affects virulence of this bacterium when there is a complete loss of phosphatidylcholine formation due to absence of both the synthase (pcs) and the methylation (pmtA) pathways. Reduced virulence results from lowered yields of bacteria within host macrophages and because of loss of high multiplicity cytotoxicity.</text>
</comment>
<comment type="catalytic activity">
    <reaction evidence="3 4">
        <text>a CDP-1,2-diacyl-sn-glycerol + choline = a 1,2-diacyl-sn-glycero-3-phosphocholine + CMP + H(+)</text>
        <dbReference type="Rhea" id="RHEA:14597"/>
        <dbReference type="ChEBI" id="CHEBI:15354"/>
        <dbReference type="ChEBI" id="CHEBI:15378"/>
        <dbReference type="ChEBI" id="CHEBI:57643"/>
        <dbReference type="ChEBI" id="CHEBI:58332"/>
        <dbReference type="ChEBI" id="CHEBI:60377"/>
        <dbReference type="EC" id="2.7.8.24"/>
    </reaction>
</comment>
<comment type="cofactor">
    <cofactor evidence="1">
        <name>Mn(2+)</name>
        <dbReference type="ChEBI" id="CHEBI:29035"/>
    </cofactor>
</comment>
<comment type="subcellular location">
    <subcellularLocation>
        <location evidence="1">Cell inner membrane</location>
        <topology evidence="1">Multi-pass membrane protein</topology>
    </subcellularLocation>
</comment>
<comment type="similarity">
    <text evidence="2">Belongs to the CDP-alcohol phosphatidyltransferase class-I family.</text>
</comment>
<evidence type="ECO:0000250" key="1">
    <source>
        <dbReference type="UniProtKB" id="Q9KJY8"/>
    </source>
</evidence>
<evidence type="ECO:0000255" key="2"/>
<evidence type="ECO:0000269" key="3">
    <source>
    </source>
</evidence>
<evidence type="ECO:0000269" key="4">
    <source>
    </source>
</evidence>
<evidence type="ECO:0000303" key="5">
    <source>
    </source>
</evidence>
<evidence type="ECO:0000303" key="6">
    <source>
    </source>
</evidence>
<evidence type="ECO:0000305" key="7"/>
<evidence type="ECO:0000312" key="8">
    <source>
        <dbReference type="EMBL" id="AAU27666.1"/>
    </source>
</evidence>
<organism>
    <name type="scientific">Legionella pneumophila subsp. pneumophila (strain Philadelphia 1 / ATCC 33152 / DSM 7513)</name>
    <dbReference type="NCBI Taxonomy" id="272624"/>
    <lineage>
        <taxon>Bacteria</taxon>
        <taxon>Pseudomonadati</taxon>
        <taxon>Pseudomonadota</taxon>
        <taxon>Gammaproteobacteria</taxon>
        <taxon>Legionellales</taxon>
        <taxon>Legionellaceae</taxon>
        <taxon>Legionella</taxon>
    </lineage>
</organism>
<accession>Q5ZV56</accession>
<gene>
    <name evidence="6" type="primary">pcsA</name>
    <name type="ordered locus">lpg1584</name>
</gene>